<reference key="1">
    <citation type="submission" date="2006-06" db="EMBL/GenBank/DDBJ databases">
        <title>Complete sequence of Rubrobacter xylanophilus DSM 9941.</title>
        <authorList>
            <consortium name="US DOE Joint Genome Institute"/>
            <person name="Copeland A."/>
            <person name="Lucas S."/>
            <person name="Lapidus A."/>
            <person name="Barry K."/>
            <person name="Detter J.C."/>
            <person name="Glavina del Rio T."/>
            <person name="Hammon N."/>
            <person name="Israni S."/>
            <person name="Dalin E."/>
            <person name="Tice H."/>
            <person name="Pitluck S."/>
            <person name="Munk A.C."/>
            <person name="Brettin T."/>
            <person name="Bruce D."/>
            <person name="Han C."/>
            <person name="Tapia R."/>
            <person name="Gilna P."/>
            <person name="Schmutz J."/>
            <person name="Larimer F."/>
            <person name="Land M."/>
            <person name="Hauser L."/>
            <person name="Kyrpides N."/>
            <person name="Lykidis A."/>
            <person name="da Costa M.S."/>
            <person name="Rainey F.A."/>
            <person name="Empadinhas N."/>
            <person name="Jolivet E."/>
            <person name="Battista J.R."/>
            <person name="Richardson P."/>
        </authorList>
    </citation>
    <scope>NUCLEOTIDE SEQUENCE [LARGE SCALE GENOMIC DNA]</scope>
    <source>
        <strain>DSM 9941 / JCM 11954 / NBRC 16129 / PRD-1</strain>
    </source>
</reference>
<sequence>MQALERDIDINRLEKISIGLASADEIREWSRGEVTKPETINYRTLRPEKDGLFDERIFGPTKDWECYCGKYKRIRFKGIICERCGVEVTRARVRRDRMGHIELAAPVAHVWFVKGVPSRMGYLLDISPKDLDRVLYFASSIVTWVDREGRANDIDRLRQQVEEEIRQIEQDRDEEITAAQALLTKRISVIKGESSPDELTEDYADVPEEEREEAIARARREAEETIEDIKRSMDEQIELIRRAWEEFQTLEPRQIVDDEELFREMKDRFGDEYGYGVYFRGGMGAEAIRDLIRQVDLEKEARELRQVVGESRGQKRQKAIKRLKVVDAFRTSGNKPEWMILDAIPVLPPDLRPMVQLDGGRFATSDLNDLYRRVINRNNRLKRLLDLGAPDVIVNNEKRMLQEAVDALFDNGRRGRAVTGAGNRPLKSLSDMLKGKQGRFRQNLLGKRVDYSGRSVIVVGPQLEMHQCGLPRLMAVELFKPFVMKVLVDRALAPNIRSAKQMVERLRPEVWDVLEDVIKEHPVLLNRAPTLHRLGIQAFEPVLVEGKAIQIHPLVCAAFNADFDGDQMAVHVPLSPEAQAEARILMLSTQNILKPADGFPVAVPSQDMVLGLYYITYAGEDFEEREPKALLASYAEADNAYREGSLRLHDKVILRREGERIETTLGRVLFNESIERTLRGYLGDAYNPAAYRFVNHELKKGEIKQLVQQYVERYPTELVSQLLDTLKHVGFHTATLAGISIGKNDIVVPEQKREILEKYEKLVEEVEEQWEAGFISDEERAERVIGLWTQAKNEVEEAMKANLWKLNPIYMMANSGARGSYSQITQLAGMRGLMTNAKGEIIDEPVKSNFMEGLTVLEYFTSTHGARKGQADTALRTADSGYLTRRLVDVAQDVVIREEDCGTDGYIELPLYLEDGQGDPNDSVAARYLARDLVNPETGEVVAEAGTDITRPLFEAWLEELPRETKVPVRTPTKCENPHGVCQKCYGRSLATNRPVDVGEAVGIIAAQSIGEPGTQLTMRTFHTGGVSGVEDITAGLPRVVELFEARHPKGEAVISDIDGIVSLEETDSERLVRVVVTAPDGSEAREYRVERQLLRPEIVDGAEIRANTPITEGSLYPHQILENDLRYGRGTTATERYLVDEVQKVYRAQGVDIHDKHIEIIVRQMLRKVLVEEPGDTRFLPEQVADRFSVLAENERVEEEGGRPAEFHTILMGITKASLATESFLSAASFQETARVLTDAAIEGKVDNLTGLKENVIIGKLIPAATGLPKYRRLTVTVEGYRADDVDELDIAAS</sequence>
<keyword id="KW-0240">DNA-directed RNA polymerase</keyword>
<keyword id="KW-0460">Magnesium</keyword>
<keyword id="KW-0479">Metal-binding</keyword>
<keyword id="KW-0548">Nucleotidyltransferase</keyword>
<keyword id="KW-1185">Reference proteome</keyword>
<keyword id="KW-0804">Transcription</keyword>
<keyword id="KW-0808">Transferase</keyword>
<keyword id="KW-0862">Zinc</keyword>
<comment type="function">
    <text evidence="1">DNA-dependent RNA polymerase catalyzes the transcription of DNA into RNA using the four ribonucleoside triphosphates as substrates.</text>
</comment>
<comment type="catalytic activity">
    <reaction evidence="1">
        <text>RNA(n) + a ribonucleoside 5'-triphosphate = RNA(n+1) + diphosphate</text>
        <dbReference type="Rhea" id="RHEA:21248"/>
        <dbReference type="Rhea" id="RHEA-COMP:14527"/>
        <dbReference type="Rhea" id="RHEA-COMP:17342"/>
        <dbReference type="ChEBI" id="CHEBI:33019"/>
        <dbReference type="ChEBI" id="CHEBI:61557"/>
        <dbReference type="ChEBI" id="CHEBI:140395"/>
        <dbReference type="EC" id="2.7.7.6"/>
    </reaction>
</comment>
<comment type="cofactor">
    <cofactor evidence="1">
        <name>Mg(2+)</name>
        <dbReference type="ChEBI" id="CHEBI:18420"/>
    </cofactor>
    <text evidence="1">Binds 1 Mg(2+) ion per subunit.</text>
</comment>
<comment type="cofactor">
    <cofactor evidence="1">
        <name>Zn(2+)</name>
        <dbReference type="ChEBI" id="CHEBI:29105"/>
    </cofactor>
    <text evidence="1">Binds 2 Zn(2+) ions per subunit.</text>
</comment>
<comment type="subunit">
    <text evidence="1">The RNAP catalytic core consists of 2 alpha, 1 beta, 1 beta' and 1 omega subunit. When a sigma factor is associated with the core the holoenzyme is formed, which can initiate transcription.</text>
</comment>
<comment type="similarity">
    <text evidence="1">Belongs to the RNA polymerase beta' chain family.</text>
</comment>
<dbReference type="EC" id="2.7.7.6" evidence="1"/>
<dbReference type="EMBL" id="CP000386">
    <property type="protein sequence ID" value="ABG05105.1"/>
    <property type="molecule type" value="Genomic_DNA"/>
</dbReference>
<dbReference type="RefSeq" id="WP_011565120.1">
    <property type="nucleotide sequence ID" value="NC_008148.1"/>
</dbReference>
<dbReference type="SMR" id="Q1AU23"/>
<dbReference type="STRING" id="266117.Rxyl_2161"/>
<dbReference type="KEGG" id="rxy:Rxyl_2161"/>
<dbReference type="eggNOG" id="COG0086">
    <property type="taxonomic scope" value="Bacteria"/>
</dbReference>
<dbReference type="HOGENOM" id="CLU_000524_3_1_11"/>
<dbReference type="OrthoDB" id="9815296at2"/>
<dbReference type="PhylomeDB" id="Q1AU23"/>
<dbReference type="Proteomes" id="UP000006637">
    <property type="component" value="Chromosome"/>
</dbReference>
<dbReference type="GO" id="GO:0000428">
    <property type="term" value="C:DNA-directed RNA polymerase complex"/>
    <property type="evidence" value="ECO:0007669"/>
    <property type="project" value="UniProtKB-KW"/>
</dbReference>
<dbReference type="GO" id="GO:0003677">
    <property type="term" value="F:DNA binding"/>
    <property type="evidence" value="ECO:0007669"/>
    <property type="project" value="UniProtKB-UniRule"/>
</dbReference>
<dbReference type="GO" id="GO:0003899">
    <property type="term" value="F:DNA-directed RNA polymerase activity"/>
    <property type="evidence" value="ECO:0007669"/>
    <property type="project" value="UniProtKB-UniRule"/>
</dbReference>
<dbReference type="GO" id="GO:0000287">
    <property type="term" value="F:magnesium ion binding"/>
    <property type="evidence" value="ECO:0007669"/>
    <property type="project" value="UniProtKB-UniRule"/>
</dbReference>
<dbReference type="GO" id="GO:0008270">
    <property type="term" value="F:zinc ion binding"/>
    <property type="evidence" value="ECO:0007669"/>
    <property type="project" value="UniProtKB-UniRule"/>
</dbReference>
<dbReference type="GO" id="GO:0006351">
    <property type="term" value="P:DNA-templated transcription"/>
    <property type="evidence" value="ECO:0007669"/>
    <property type="project" value="UniProtKB-UniRule"/>
</dbReference>
<dbReference type="CDD" id="cd02655">
    <property type="entry name" value="RNAP_beta'_C"/>
    <property type="match status" value="1"/>
</dbReference>
<dbReference type="CDD" id="cd01609">
    <property type="entry name" value="RNAP_beta'_N"/>
    <property type="match status" value="1"/>
</dbReference>
<dbReference type="Gene3D" id="1.10.132.30">
    <property type="match status" value="1"/>
</dbReference>
<dbReference type="Gene3D" id="1.10.150.390">
    <property type="match status" value="1"/>
</dbReference>
<dbReference type="Gene3D" id="1.10.1790.20">
    <property type="match status" value="1"/>
</dbReference>
<dbReference type="Gene3D" id="1.10.40.90">
    <property type="match status" value="1"/>
</dbReference>
<dbReference type="Gene3D" id="2.40.40.20">
    <property type="match status" value="1"/>
</dbReference>
<dbReference type="Gene3D" id="2.40.50.100">
    <property type="match status" value="1"/>
</dbReference>
<dbReference type="Gene3D" id="4.10.860.120">
    <property type="entry name" value="RNA polymerase II, clamp domain"/>
    <property type="match status" value="1"/>
</dbReference>
<dbReference type="Gene3D" id="1.10.274.100">
    <property type="entry name" value="RNA polymerase Rpb1, domain 3"/>
    <property type="match status" value="2"/>
</dbReference>
<dbReference type="HAMAP" id="MF_01322">
    <property type="entry name" value="RNApol_bact_RpoC"/>
    <property type="match status" value="1"/>
</dbReference>
<dbReference type="InterPro" id="IPR045867">
    <property type="entry name" value="DNA-dir_RpoC_beta_prime"/>
</dbReference>
<dbReference type="InterPro" id="IPR012754">
    <property type="entry name" value="DNA-dir_RpoC_beta_prime_bact"/>
</dbReference>
<dbReference type="InterPro" id="IPR000722">
    <property type="entry name" value="RNA_pol_asu"/>
</dbReference>
<dbReference type="InterPro" id="IPR006592">
    <property type="entry name" value="RNA_pol_N"/>
</dbReference>
<dbReference type="InterPro" id="IPR007080">
    <property type="entry name" value="RNA_pol_Rpb1_1"/>
</dbReference>
<dbReference type="InterPro" id="IPR007066">
    <property type="entry name" value="RNA_pol_Rpb1_3"/>
</dbReference>
<dbReference type="InterPro" id="IPR042102">
    <property type="entry name" value="RNA_pol_Rpb1_3_sf"/>
</dbReference>
<dbReference type="InterPro" id="IPR007083">
    <property type="entry name" value="RNA_pol_Rpb1_4"/>
</dbReference>
<dbReference type="InterPro" id="IPR007081">
    <property type="entry name" value="RNA_pol_Rpb1_5"/>
</dbReference>
<dbReference type="InterPro" id="IPR044893">
    <property type="entry name" value="RNA_pol_Rpb1_clamp_domain"/>
</dbReference>
<dbReference type="InterPro" id="IPR038120">
    <property type="entry name" value="Rpb1_funnel_sf"/>
</dbReference>
<dbReference type="NCBIfam" id="NF011498">
    <property type="entry name" value="PRK14906.1"/>
    <property type="match status" value="1"/>
</dbReference>
<dbReference type="NCBIfam" id="TIGR02386">
    <property type="entry name" value="rpoC_TIGR"/>
    <property type="match status" value="1"/>
</dbReference>
<dbReference type="PANTHER" id="PTHR19376">
    <property type="entry name" value="DNA-DIRECTED RNA POLYMERASE"/>
    <property type="match status" value="1"/>
</dbReference>
<dbReference type="PANTHER" id="PTHR19376:SF54">
    <property type="entry name" value="DNA-DIRECTED RNA POLYMERASE SUBUNIT BETA"/>
    <property type="match status" value="1"/>
</dbReference>
<dbReference type="Pfam" id="PF04997">
    <property type="entry name" value="RNA_pol_Rpb1_1"/>
    <property type="match status" value="1"/>
</dbReference>
<dbReference type="Pfam" id="PF00623">
    <property type="entry name" value="RNA_pol_Rpb1_2"/>
    <property type="match status" value="1"/>
</dbReference>
<dbReference type="Pfam" id="PF04983">
    <property type="entry name" value="RNA_pol_Rpb1_3"/>
    <property type="match status" value="1"/>
</dbReference>
<dbReference type="Pfam" id="PF05000">
    <property type="entry name" value="RNA_pol_Rpb1_4"/>
    <property type="match status" value="1"/>
</dbReference>
<dbReference type="Pfam" id="PF04998">
    <property type="entry name" value="RNA_pol_Rpb1_5"/>
    <property type="match status" value="1"/>
</dbReference>
<dbReference type="SMART" id="SM00663">
    <property type="entry name" value="RPOLA_N"/>
    <property type="match status" value="1"/>
</dbReference>
<dbReference type="SUPFAM" id="SSF64484">
    <property type="entry name" value="beta and beta-prime subunits of DNA dependent RNA-polymerase"/>
    <property type="match status" value="1"/>
</dbReference>
<protein>
    <recommendedName>
        <fullName evidence="1">DNA-directed RNA polymerase subunit beta'</fullName>
        <shortName evidence="1">RNAP subunit beta'</shortName>
        <ecNumber evidence="1">2.7.7.6</ecNumber>
    </recommendedName>
    <alternativeName>
        <fullName evidence="1">RNA polymerase subunit beta'</fullName>
    </alternativeName>
    <alternativeName>
        <fullName evidence="1">Transcriptase subunit beta'</fullName>
    </alternativeName>
</protein>
<gene>
    <name evidence="1" type="primary">rpoC</name>
    <name type="ordered locus">Rxyl_2161</name>
</gene>
<evidence type="ECO:0000255" key="1">
    <source>
        <dbReference type="HAMAP-Rule" id="MF_01322"/>
    </source>
</evidence>
<name>RPOC_RUBXD</name>
<accession>Q1AU23</accession>
<feature type="chain" id="PRO_0000308877" description="DNA-directed RNA polymerase subunit beta'">
    <location>
        <begin position="1"/>
        <end position="1295"/>
    </location>
</feature>
<feature type="binding site" evidence="1">
    <location>
        <position position="66"/>
    </location>
    <ligand>
        <name>Zn(2+)</name>
        <dbReference type="ChEBI" id="CHEBI:29105"/>
        <label>1</label>
    </ligand>
</feature>
<feature type="binding site" evidence="1">
    <location>
        <position position="68"/>
    </location>
    <ligand>
        <name>Zn(2+)</name>
        <dbReference type="ChEBI" id="CHEBI:29105"/>
        <label>1</label>
    </ligand>
</feature>
<feature type="binding site" evidence="1">
    <location>
        <position position="81"/>
    </location>
    <ligand>
        <name>Zn(2+)</name>
        <dbReference type="ChEBI" id="CHEBI:29105"/>
        <label>1</label>
    </ligand>
</feature>
<feature type="binding site" evidence="1">
    <location>
        <position position="84"/>
    </location>
    <ligand>
        <name>Zn(2+)</name>
        <dbReference type="ChEBI" id="CHEBI:29105"/>
        <label>1</label>
    </ligand>
</feature>
<feature type="binding site" evidence="1">
    <location>
        <position position="562"/>
    </location>
    <ligand>
        <name>Mg(2+)</name>
        <dbReference type="ChEBI" id="CHEBI:18420"/>
    </ligand>
</feature>
<feature type="binding site" evidence="1">
    <location>
        <position position="564"/>
    </location>
    <ligand>
        <name>Mg(2+)</name>
        <dbReference type="ChEBI" id="CHEBI:18420"/>
    </ligand>
</feature>
<feature type="binding site" evidence="1">
    <location>
        <position position="566"/>
    </location>
    <ligand>
        <name>Mg(2+)</name>
        <dbReference type="ChEBI" id="CHEBI:18420"/>
    </ligand>
</feature>
<feature type="binding site" evidence="1">
    <location>
        <position position="901"/>
    </location>
    <ligand>
        <name>Zn(2+)</name>
        <dbReference type="ChEBI" id="CHEBI:29105"/>
        <label>2</label>
    </ligand>
</feature>
<feature type="binding site" evidence="1">
    <location>
        <position position="975"/>
    </location>
    <ligand>
        <name>Zn(2+)</name>
        <dbReference type="ChEBI" id="CHEBI:29105"/>
        <label>2</label>
    </ligand>
</feature>
<feature type="binding site" evidence="1">
    <location>
        <position position="982"/>
    </location>
    <ligand>
        <name>Zn(2+)</name>
        <dbReference type="ChEBI" id="CHEBI:29105"/>
        <label>2</label>
    </ligand>
</feature>
<feature type="binding site" evidence="1">
    <location>
        <position position="985"/>
    </location>
    <ligand>
        <name>Zn(2+)</name>
        <dbReference type="ChEBI" id="CHEBI:29105"/>
        <label>2</label>
    </ligand>
</feature>
<organism>
    <name type="scientific">Rubrobacter xylanophilus (strain DSM 9941 / JCM 11954 / NBRC 16129 / PRD-1)</name>
    <dbReference type="NCBI Taxonomy" id="266117"/>
    <lineage>
        <taxon>Bacteria</taxon>
        <taxon>Bacillati</taxon>
        <taxon>Actinomycetota</taxon>
        <taxon>Rubrobacteria</taxon>
        <taxon>Rubrobacterales</taxon>
        <taxon>Rubrobacteraceae</taxon>
        <taxon>Rubrobacter</taxon>
    </lineage>
</organism>
<proteinExistence type="inferred from homology"/>